<feature type="chain" id="PRO_0000307733" description="Putative monooxygenase p33MONOX">
    <location>
        <begin position="1"/>
        <end position="304"/>
    </location>
</feature>
<feature type="region of interest" description="Disordered" evidence="4">
    <location>
        <begin position="1"/>
        <end position="22"/>
    </location>
</feature>
<feature type="region of interest" description="Disordered" evidence="4">
    <location>
        <begin position="38"/>
        <end position="57"/>
    </location>
</feature>
<feature type="region of interest" description="Disordered" evidence="4">
    <location>
        <begin position="69"/>
        <end position="96"/>
    </location>
</feature>
<feature type="region of interest" description="Disordered" evidence="4">
    <location>
        <begin position="159"/>
        <end position="231"/>
    </location>
</feature>
<feature type="region of interest" description="Disordered" evidence="4">
    <location>
        <begin position="262"/>
        <end position="304"/>
    </location>
</feature>
<feature type="short sequence motif" description="Flavin-containing monooxygenase motif">
    <location>
        <begin position="68"/>
        <end position="78"/>
    </location>
</feature>
<feature type="compositionally biased region" description="Polar residues" evidence="4">
    <location>
        <begin position="77"/>
        <end position="90"/>
    </location>
</feature>
<feature type="compositionally biased region" description="Low complexity" evidence="4">
    <location>
        <begin position="171"/>
        <end position="186"/>
    </location>
</feature>
<feature type="modified residue" description="Phosphothreonine" evidence="3">
    <location>
        <position position="45"/>
    </location>
</feature>
<feature type="modified residue" description="Phosphoserine" evidence="2">
    <location>
        <position position="183"/>
    </location>
</feature>
<feature type="modified residue" description="Phosphoserine" evidence="8">
    <location>
        <position position="184"/>
    </location>
</feature>
<feature type="splice variant" id="VSP_028806" description="In isoform 2." evidence="6">
    <location>
        <begin position="1"/>
        <end position="39"/>
    </location>
</feature>
<feature type="splice variant" id="VSP_028807" description="In isoform 2." evidence="6">
    <original>DPAPMTPPPSDMGSI</original>
    <variation>MEPVTKTPELTWAAS</variation>
    <location>
        <begin position="40"/>
        <end position="54"/>
    </location>
</feature>
<protein>
    <recommendedName>
        <fullName>Putative monooxygenase p33MONOX</fullName>
        <ecNumber>1.-.-.-</ecNumber>
    </recommendedName>
    <alternativeName>
        <fullName>liver regeneration-related protein LRRG011</fullName>
    </alternativeName>
</protein>
<comment type="function">
    <text evidence="1">Potential NADPH-dependent oxidoreductase. May be involved in the regulation of neuronal survival, differentiation and axonal outgrowth (By similarity).</text>
</comment>
<comment type="subunit">
    <text evidence="2">Interacts with NELFB, NOL12 and PRNP.</text>
</comment>
<comment type="subcellular location">
    <subcellularLocation>
        <location evidence="5">Cytoplasm</location>
    </subcellularLocation>
</comment>
<comment type="alternative products">
    <event type="alternative splicing"/>
    <isoform>
        <id>Q5U2R6-1</id>
        <name>1</name>
        <sequence type="displayed"/>
    </isoform>
    <isoform>
        <id>Q5U2R6-2</id>
        <name>2</name>
        <sequence type="described" ref="VSP_028806 VSP_028807"/>
    </isoform>
</comment>
<comment type="similarity">
    <text evidence="7">Belongs to the P33MONOX family.</text>
</comment>
<keyword id="KW-0025">Alternative splicing</keyword>
<keyword id="KW-0963">Cytoplasm</keyword>
<keyword id="KW-0521">NADP</keyword>
<keyword id="KW-0560">Oxidoreductase</keyword>
<keyword id="KW-0597">Phosphoprotein</keyword>
<keyword id="KW-1185">Reference proteome</keyword>
<organism>
    <name type="scientific">Rattus norvegicus</name>
    <name type="common">Rat</name>
    <dbReference type="NCBI Taxonomy" id="10116"/>
    <lineage>
        <taxon>Eukaryota</taxon>
        <taxon>Metazoa</taxon>
        <taxon>Chordata</taxon>
        <taxon>Craniata</taxon>
        <taxon>Vertebrata</taxon>
        <taxon>Euteleostomi</taxon>
        <taxon>Mammalia</taxon>
        <taxon>Eutheria</taxon>
        <taxon>Euarchontoglires</taxon>
        <taxon>Glires</taxon>
        <taxon>Rodentia</taxon>
        <taxon>Myomorpha</taxon>
        <taxon>Muroidea</taxon>
        <taxon>Muridae</taxon>
        <taxon>Murinae</taxon>
        <taxon>Rattus</taxon>
    </lineage>
</organism>
<reference key="1">
    <citation type="submission" date="2003-06" db="EMBL/GenBank/DDBJ databases">
        <title>Liver regeneration after PH.</title>
        <authorList>
            <person name="Xu C.S."/>
            <person name="Li W.Q."/>
            <person name="Li Y.C."/>
            <person name="Ma H."/>
            <person name="Wang L."/>
            <person name="Wang S.F."/>
            <person name="Han H.P."/>
            <person name="Wang G.P."/>
            <person name="Chai L.Q."/>
            <person name="Yuan J.Y."/>
            <person name="Yang K.J."/>
            <person name="Yan H.M."/>
            <person name="Chang C.F."/>
            <person name="Zhao L.F."/>
            <person name="Shi J.B."/>
            <person name="Rahman S."/>
            <person name="Wang Q.N."/>
            <person name="Zhang J.B."/>
        </authorList>
    </citation>
    <scope>NUCLEOTIDE SEQUENCE [LARGE SCALE MRNA] (ISOFORM 2)</scope>
    <source>
        <tissue>Liver</tissue>
    </source>
</reference>
<reference key="2">
    <citation type="journal article" date="2004" name="Genome Res.">
        <title>The status, quality, and expansion of the NIH full-length cDNA project: the Mammalian Gene Collection (MGC).</title>
        <authorList>
            <consortium name="The MGC Project Team"/>
        </authorList>
    </citation>
    <scope>NUCLEOTIDE SEQUENCE [LARGE SCALE MRNA] (ISOFORM 1)</scope>
    <source>
        <tissue>Heart</tissue>
    </source>
</reference>
<reference key="3">
    <citation type="journal article" date="2011" name="Mol. Cell. Biochem.">
        <title>Characterizing the novel protein p33MONOX.</title>
        <authorList>
            <person name="Mishra M."/>
            <person name="Inoue N."/>
            <person name="Heese K."/>
        </authorList>
    </citation>
    <scope>SUBCELLULAR LOCATION</scope>
</reference>
<reference key="4">
    <citation type="journal article" date="2012" name="Nat. Commun.">
        <title>Quantitative maps of protein phosphorylation sites across 14 different rat organs and tissues.</title>
        <authorList>
            <person name="Lundby A."/>
            <person name="Secher A."/>
            <person name="Lage K."/>
            <person name="Nordsborg N.B."/>
            <person name="Dmytriyev A."/>
            <person name="Lundby C."/>
            <person name="Olsen J.V."/>
        </authorList>
    </citation>
    <scope>PHOSPHORYLATION [LARGE SCALE ANALYSIS] AT SER-184</scope>
    <scope>IDENTIFICATION BY MASS SPECTROMETRY [LARGE SCALE ANALYSIS]</scope>
</reference>
<evidence type="ECO:0000250" key="1"/>
<evidence type="ECO:0000250" key="2">
    <source>
        <dbReference type="UniProtKB" id="Q96A73"/>
    </source>
</evidence>
<evidence type="ECO:0000250" key="3">
    <source>
        <dbReference type="UniProtKB" id="Q9DBN4"/>
    </source>
</evidence>
<evidence type="ECO:0000256" key="4">
    <source>
        <dbReference type="SAM" id="MobiDB-lite"/>
    </source>
</evidence>
<evidence type="ECO:0000269" key="5">
    <source>
    </source>
</evidence>
<evidence type="ECO:0000303" key="6">
    <source ref="1"/>
</evidence>
<evidence type="ECO:0000305" key="7"/>
<evidence type="ECO:0007744" key="8">
    <source>
    </source>
</evidence>
<proteinExistence type="evidence at protein level"/>
<gene>
    <name type="primary">P33monox</name>
    <name type="ORF">Aa2-141</name>
</gene>
<name>P33MX_RAT</name>
<dbReference type="EC" id="1.-.-.-"/>
<dbReference type="EMBL" id="AY325163">
    <property type="protein sequence ID" value="AAP92564.1"/>
    <property type="molecule type" value="mRNA"/>
</dbReference>
<dbReference type="EMBL" id="BC085893">
    <property type="protein sequence ID" value="AAH85893.1"/>
    <property type="molecule type" value="mRNA"/>
</dbReference>
<dbReference type="RefSeq" id="NP_001014029.1">
    <molecule id="Q5U2R6-1"/>
    <property type="nucleotide sequence ID" value="NM_001014007.1"/>
</dbReference>
<dbReference type="SMR" id="Q5U2R6"/>
<dbReference type="FunCoup" id="Q5U2R6">
    <property type="interactions" value="1016"/>
</dbReference>
<dbReference type="STRING" id="10116.ENSRNOP00000023125"/>
<dbReference type="GlyGen" id="Q5U2R6">
    <property type="glycosylation" value="2 sites"/>
</dbReference>
<dbReference type="iPTMnet" id="Q5U2R6"/>
<dbReference type="PhosphoSitePlus" id="Q5U2R6"/>
<dbReference type="PaxDb" id="10116-ENSRNOP00000023125"/>
<dbReference type="Ensembl" id="ENSRNOT00000098242.1">
    <molecule id="Q5U2R6-1"/>
    <property type="protein sequence ID" value="ENSRNOP00000085391.1"/>
    <property type="gene ID" value="ENSRNOG00000017133.8"/>
</dbReference>
<dbReference type="GeneID" id="306766"/>
<dbReference type="KEGG" id="rno:306766"/>
<dbReference type="UCSC" id="RGD:1359256">
    <molecule id="Q5U2R6-1"/>
    <property type="organism name" value="rat"/>
</dbReference>
<dbReference type="AGR" id="RGD:1359256"/>
<dbReference type="CTD" id="57179"/>
<dbReference type="RGD" id="1359256">
    <property type="gene designation" value="LOC306766"/>
</dbReference>
<dbReference type="eggNOG" id="ENOG502QRB0">
    <property type="taxonomic scope" value="Eukaryota"/>
</dbReference>
<dbReference type="GeneTree" id="ENSGT00390000000537"/>
<dbReference type="HOGENOM" id="CLU_079377_0_0_1"/>
<dbReference type="InParanoid" id="Q5U2R6"/>
<dbReference type="OMA" id="TIQAYKG"/>
<dbReference type="OrthoDB" id="8935954at2759"/>
<dbReference type="PhylomeDB" id="Q5U2R6"/>
<dbReference type="TreeFam" id="TF332226"/>
<dbReference type="PRO" id="PR:Q5U2R6"/>
<dbReference type="Proteomes" id="UP000002494">
    <property type="component" value="Chromosome 17"/>
</dbReference>
<dbReference type="Bgee" id="ENSRNOG00000017133">
    <property type="expression patterns" value="Expressed in adult mammalian kidney and 19 other cell types or tissues"/>
</dbReference>
<dbReference type="GO" id="GO:0005737">
    <property type="term" value="C:cytoplasm"/>
    <property type="evidence" value="ECO:0000250"/>
    <property type="project" value="UniProtKB"/>
</dbReference>
<dbReference type="GO" id="GO:0016491">
    <property type="term" value="F:oxidoreductase activity"/>
    <property type="evidence" value="ECO:0007669"/>
    <property type="project" value="UniProtKB-KW"/>
</dbReference>
<dbReference type="InterPro" id="IPR026759">
    <property type="entry name" value="P33MONOX"/>
</dbReference>
<dbReference type="PANTHER" id="PTHR28342">
    <property type="entry name" value="MONOOXYGENASE P33MONOX-RELATED"/>
    <property type="match status" value="1"/>
</dbReference>
<dbReference type="PANTHER" id="PTHR28342:SF1">
    <property type="entry name" value="MONOOXYGENASE P33MONOX-RELATED"/>
    <property type="match status" value="1"/>
</dbReference>
<dbReference type="Pfam" id="PF15302">
    <property type="entry name" value="P33MONOX"/>
    <property type="match status" value="1"/>
</dbReference>
<accession>Q5U2R6</accession>
<accession>Q7TP81</accession>
<sequence>MASRQPEVPPALAPSGPLSKMSLPIGMCRRAFSYDDALEDPAPMTPPPSDMGSIPWKPVIPERKYQHLDKTEEGAASVSSLAVTPSTATDSSDKAPVVKAKATHIIMNSLITKQTQESIQRFEQQAGLRDAGYTPHKGLTTEETKYLRVAEALHKLKLQSGETTREEKHPASAQSSPSSTPHSSPKQKSRGWFPSGSSTALPAPNPHSMDPGGGNDRNSADKWSLFGPRPLQKSDSGFAIQAYKGAPKPSPMEVMRAQATRAGEDPAVFKPPKMDVPVVEGKKQPPRTHNLKPRDLNVLTPTGF</sequence>